<organism>
    <name type="scientific">Gallus gallus</name>
    <name type="common">Chicken</name>
    <dbReference type="NCBI Taxonomy" id="9031"/>
    <lineage>
        <taxon>Eukaryota</taxon>
        <taxon>Metazoa</taxon>
        <taxon>Chordata</taxon>
        <taxon>Craniata</taxon>
        <taxon>Vertebrata</taxon>
        <taxon>Euteleostomi</taxon>
        <taxon>Archelosauria</taxon>
        <taxon>Archosauria</taxon>
        <taxon>Dinosauria</taxon>
        <taxon>Saurischia</taxon>
        <taxon>Theropoda</taxon>
        <taxon>Coelurosauria</taxon>
        <taxon>Aves</taxon>
        <taxon>Neognathae</taxon>
        <taxon>Galloanserae</taxon>
        <taxon>Galliformes</taxon>
        <taxon>Phasianidae</taxon>
        <taxon>Phasianinae</taxon>
        <taxon>Gallus</taxon>
    </lineage>
</organism>
<evidence type="ECO:0000250" key="1">
    <source>
        <dbReference type="UniProtKB" id="O75390"/>
    </source>
</evidence>
<evidence type="ECO:0000250" key="2">
    <source>
        <dbReference type="UniProtKB" id="P00889"/>
    </source>
</evidence>
<evidence type="ECO:0000255" key="3">
    <source>
        <dbReference type="PROSITE-ProRule" id="PRU10117"/>
    </source>
</evidence>
<evidence type="ECO:0000269" key="4">
    <source>
    </source>
</evidence>
<evidence type="ECO:0000269" key="5">
    <source>
    </source>
</evidence>
<evidence type="ECO:0000305" key="6"/>
<evidence type="ECO:0007744" key="7">
    <source>
        <dbReference type="PDB" id="5CSC"/>
    </source>
</evidence>
<evidence type="ECO:0007744" key="8">
    <source>
        <dbReference type="PDB" id="5CTS"/>
    </source>
</evidence>
<evidence type="ECO:0007744" key="9">
    <source>
        <dbReference type="PDB" id="6CTS"/>
    </source>
</evidence>
<evidence type="ECO:0007829" key="10">
    <source>
        <dbReference type="PDB" id="1CSH"/>
    </source>
</evidence>
<evidence type="ECO:0007829" key="11">
    <source>
        <dbReference type="PDB" id="1CSR"/>
    </source>
</evidence>
<evidence type="ECO:0007829" key="12">
    <source>
        <dbReference type="PDB" id="5CSC"/>
    </source>
</evidence>
<evidence type="ECO:0007829" key="13">
    <source>
        <dbReference type="PDB" id="6CSC"/>
    </source>
</evidence>
<feature type="chain" id="PRO_0000169983" description="Citrate synthase, mitochondrial">
    <location>
        <begin position="1"/>
        <end position="433"/>
    </location>
</feature>
<feature type="active site">
    <location>
        <position position="274"/>
    </location>
</feature>
<feature type="active site">
    <location>
        <position position="320"/>
    </location>
</feature>
<feature type="active site">
    <location>
        <position position="375"/>
    </location>
</feature>
<feature type="binding site" description="in chain A" evidence="1">
    <location>
        <position position="329"/>
    </location>
    <ligand>
        <name>oxaloacetate</name>
        <dbReference type="ChEBI" id="CHEBI:16452"/>
        <note>ligand shared between homodimeric partners</note>
    </ligand>
</feature>
<feature type="binding site" description="in chain A" evidence="1">
    <location>
        <position position="401"/>
    </location>
    <ligand>
        <name>oxaloacetate</name>
        <dbReference type="ChEBI" id="CHEBI:16452"/>
        <note>ligand shared between homodimeric partners</note>
    </ligand>
</feature>
<feature type="binding site" description="in chain B" evidence="1">
    <location>
        <position position="421"/>
    </location>
    <ligand>
        <name>oxaloacetate</name>
        <dbReference type="ChEBI" id="CHEBI:16452"/>
        <note>ligand shared between homodimeric partners</note>
    </ligand>
</feature>
<feature type="helix" evidence="10">
    <location>
        <begin position="6"/>
        <end position="28"/>
    </location>
</feature>
<feature type="strand" evidence="13">
    <location>
        <begin position="31"/>
        <end position="34"/>
    </location>
</feature>
<feature type="helix" evidence="10">
    <location>
        <begin position="38"/>
        <end position="42"/>
    </location>
</feature>
<feature type="turn" evidence="10">
    <location>
        <begin position="43"/>
        <end position="47"/>
    </location>
</feature>
<feature type="strand" evidence="13">
    <location>
        <begin position="49"/>
        <end position="52"/>
    </location>
</feature>
<feature type="strand" evidence="10">
    <location>
        <begin position="55"/>
        <end position="59"/>
    </location>
</feature>
<feature type="turn" evidence="10">
    <location>
        <begin position="60"/>
        <end position="62"/>
    </location>
</feature>
<feature type="strand" evidence="10">
    <location>
        <begin position="63"/>
        <end position="66"/>
    </location>
</feature>
<feature type="helix" evidence="10">
    <location>
        <begin position="71"/>
        <end position="77"/>
    </location>
</feature>
<feature type="strand" evidence="13">
    <location>
        <begin position="85"/>
        <end position="87"/>
    </location>
</feature>
<feature type="helix" evidence="10">
    <location>
        <begin position="89"/>
        <end position="98"/>
    </location>
</feature>
<feature type="helix" evidence="10">
    <location>
        <begin position="104"/>
        <end position="117"/>
    </location>
</feature>
<feature type="helix" evidence="10">
    <location>
        <begin position="122"/>
        <end position="130"/>
    </location>
</feature>
<feature type="helix" evidence="10">
    <location>
        <begin position="137"/>
        <end position="147"/>
    </location>
</feature>
<feature type="helix" evidence="10">
    <location>
        <begin position="148"/>
        <end position="151"/>
    </location>
</feature>
<feature type="helix" evidence="10">
    <location>
        <begin position="153"/>
        <end position="159"/>
    </location>
</feature>
<feature type="helix" evidence="10">
    <location>
        <begin position="164"/>
        <end position="166"/>
    </location>
</feature>
<feature type="helix" evidence="10">
    <location>
        <begin position="167"/>
        <end position="194"/>
    </location>
</feature>
<feature type="turn" evidence="12">
    <location>
        <begin position="195"/>
        <end position="197"/>
    </location>
</feature>
<feature type="helix" evidence="10">
    <location>
        <begin position="209"/>
        <end position="217"/>
    </location>
</feature>
<feature type="helix" evidence="10">
    <location>
        <begin position="222"/>
        <end position="234"/>
    </location>
</feature>
<feature type="strand" evidence="11">
    <location>
        <begin position="240"/>
        <end position="242"/>
    </location>
</feature>
<feature type="helix" evidence="10">
    <location>
        <begin position="243"/>
        <end position="252"/>
    </location>
</feature>
<feature type="turn" evidence="10">
    <location>
        <begin position="253"/>
        <end position="255"/>
    </location>
</feature>
<feature type="helix" evidence="10">
    <location>
        <begin position="258"/>
        <end position="269"/>
    </location>
</feature>
<feature type="turn" evidence="10">
    <location>
        <begin position="272"/>
        <end position="276"/>
    </location>
</feature>
<feature type="helix" evidence="10">
    <location>
        <begin position="277"/>
        <end position="291"/>
    </location>
</feature>
<feature type="helix" evidence="10">
    <location>
        <begin position="298"/>
        <end position="310"/>
    </location>
</feature>
<feature type="helix" evidence="10">
    <location>
        <begin position="328"/>
        <end position="340"/>
    </location>
</feature>
<feature type="helix" evidence="10">
    <location>
        <begin position="345"/>
        <end position="364"/>
    </location>
</feature>
<feature type="helix" evidence="10">
    <location>
        <begin position="375"/>
        <end position="384"/>
    </location>
</feature>
<feature type="helix" evidence="10">
    <location>
        <begin position="390"/>
        <end position="392"/>
    </location>
</feature>
<feature type="helix" evidence="10">
    <location>
        <begin position="393"/>
        <end position="414"/>
    </location>
</feature>
<feature type="strand" evidence="13">
    <location>
        <begin position="423"/>
        <end position="425"/>
    </location>
</feature>
<feature type="helix" evidence="10">
    <location>
        <begin position="427"/>
        <end position="433"/>
    </location>
</feature>
<name>CISY_CHICK</name>
<accession>P23007</accession>
<comment type="function">
    <text evidence="6">Key enzyme of the Krebs tricarboxylic acid cycle which catalyzes the synthesis of citrate from acetyl coenzyme A and oxaloacetate.</text>
</comment>
<comment type="catalytic activity">
    <reaction evidence="3 5">
        <text>oxaloacetate + acetyl-CoA + H2O = citrate + CoA + H(+)</text>
        <dbReference type="Rhea" id="RHEA:16845"/>
        <dbReference type="ChEBI" id="CHEBI:15377"/>
        <dbReference type="ChEBI" id="CHEBI:15378"/>
        <dbReference type="ChEBI" id="CHEBI:16452"/>
        <dbReference type="ChEBI" id="CHEBI:16947"/>
        <dbReference type="ChEBI" id="CHEBI:57287"/>
        <dbReference type="ChEBI" id="CHEBI:57288"/>
        <dbReference type="EC" id="2.3.3.1"/>
    </reaction>
</comment>
<comment type="pathway">
    <text>Carbohydrate metabolism; tricarboxylic acid cycle; isocitrate from oxaloacetate: step 1/2.</text>
</comment>
<comment type="subunit">
    <text evidence="4">Homodimer.</text>
</comment>
<comment type="subcellular location">
    <subcellularLocation>
        <location evidence="2">Mitochondrion matrix</location>
    </subcellularLocation>
</comment>
<comment type="miscellaneous">
    <text>Citrate synthase is found in nearly all cells capable of oxidative metabolism.</text>
</comment>
<comment type="similarity">
    <text evidence="6">Belongs to the citrate synthase family.</text>
</comment>
<comment type="caution">
    <text evidence="6">This is an X-ray determined sequence which was established using the sequence of pig citrate synthase and modifying it based on the observed electron density.</text>
</comment>
<sequence length="433" mass="47378">ASSTNLKDVLAALIPKEQARIKTFRQQHGGTALGQITVDMSYGGMRGMKGLVYETSVLDPDEGIRFRGFSIPECQKLLPKGGXGGEPLPEGLFWLLVTGQIPTGAQVSWLSKEWAKRAALPSHVVTMLDNFPTNLHPMSQLSAAITALNSESNFARAYAEGILRTKYWEMVYESAMDLIAKLPCVAAKIYRNLYRAGSSIGAIDSKLDWSHNFTNMLGYTDAQFTELMRLYLTIHSDHEGGNVSAHTSHLVGSALSDPYLSFAAAMNGLAGPLHGLANQEVLGWLAQLQKAXXXAGADASLRDYIWNTLNSGRVVPGYGHAVLRKTDPRYTCQREFALKHLPGDPMFKLVAQLYKIVPNVLLEQGAAANPWPNVDAHSGVLLQYYGMTEMNYYTVLFGVSRALGVLAQLIWSRALGFPLERPKSMSTDGLIAL</sequence>
<gene>
    <name type="primary">CS</name>
</gene>
<reference evidence="8 9" key="1">
    <citation type="journal article" date="1990" name="Biochemistry">
        <title>Proposed mechanism for the condensation reaction of citrate synthase: 1.9-A structure of the ternary complex with oxaloacetate and carboxymethyl coenzyme A.</title>
        <authorList>
            <person name="Karpusas M."/>
            <person name="Branchaud B."/>
            <person name="Remington S.J."/>
        </authorList>
    </citation>
    <scope>X-RAY CRYSTALLOGRAPHY (1.9 ANGSTROMS)</scope>
    <scope>CATALYTIC ACTIVITY</scope>
    <source>
        <tissue>Heart muscle</tissue>
    </source>
</reference>
<reference evidence="7" key="2">
    <citation type="journal article" date="1991" name="Biochemistry">
        <title>Crystal structure of an open conformation of citrate synthase from chicken heart at 2.8-A resolution.</title>
        <authorList>
            <person name="Liao D.-I."/>
            <person name="Karpusas M."/>
            <person name="Remington S.J."/>
        </authorList>
    </citation>
    <scope>X-RAY CRYSTALLOGRAPHY (2.8 ANGSTROMS) OF OPEN CONFORMATION</scope>
    <scope>SUBUNIT</scope>
</reference>
<keyword id="KW-0002">3D-structure</keyword>
<keyword id="KW-0496">Mitochondrion</keyword>
<keyword id="KW-1185">Reference proteome</keyword>
<keyword id="KW-0808">Transferase</keyword>
<keyword id="KW-0816">Tricarboxylic acid cycle</keyword>
<proteinExistence type="evidence at protein level"/>
<dbReference type="EC" id="2.3.3.1"/>
<dbReference type="PDB" id="1AL6">
    <property type="method" value="X-ray"/>
    <property type="resolution" value="1.85 A"/>
    <property type="chains" value="A=1-80, A=82-433"/>
</dbReference>
<dbReference type="PDB" id="1AMZ">
    <property type="method" value="X-ray"/>
    <property type="resolution" value="1.80 A"/>
    <property type="chains" value="A=3-80, A=82-433"/>
</dbReference>
<dbReference type="PDB" id="1CSC">
    <property type="method" value="X-ray"/>
    <property type="resolution" value="1.70 A"/>
    <property type="chains" value="A=1-433"/>
</dbReference>
<dbReference type="PDB" id="1CSH">
    <property type="method" value="X-ray"/>
    <property type="resolution" value="1.65 A"/>
    <property type="chains" value="A=3-433"/>
</dbReference>
<dbReference type="PDB" id="1CSI">
    <property type="method" value="X-ray"/>
    <property type="resolution" value="1.70 A"/>
    <property type="chains" value="A=3-433"/>
</dbReference>
<dbReference type="PDB" id="1CSR">
    <property type="method" value="X-ray"/>
    <property type="resolution" value="1.70 A"/>
    <property type="chains" value="A=3-433"/>
</dbReference>
<dbReference type="PDB" id="1CSS">
    <property type="method" value="X-ray"/>
    <property type="resolution" value="1.70 A"/>
    <property type="chains" value="A=3-433"/>
</dbReference>
<dbReference type="PDB" id="2CSC">
    <property type="method" value="X-ray"/>
    <property type="resolution" value="1.70 A"/>
    <property type="chains" value="A=1-433"/>
</dbReference>
<dbReference type="PDB" id="3CSC">
    <property type="method" value="X-ray"/>
    <property type="resolution" value="1.90 A"/>
    <property type="chains" value="A=1-433"/>
</dbReference>
<dbReference type="PDB" id="4CSC">
    <property type="method" value="X-ray"/>
    <property type="resolution" value="1.90 A"/>
    <property type="chains" value="A=1-433"/>
</dbReference>
<dbReference type="PDB" id="5CSC">
    <property type="method" value="X-ray"/>
    <property type="resolution" value="2.80 A"/>
    <property type="chains" value="A/B=1-433"/>
</dbReference>
<dbReference type="PDB" id="5CTS">
    <property type="method" value="X-ray"/>
    <property type="resolution" value="1.90 A"/>
    <property type="chains" value="A=1-433"/>
</dbReference>
<dbReference type="PDB" id="6CSC">
    <property type="method" value="X-ray"/>
    <property type="resolution" value="2.25 A"/>
    <property type="chains" value="A/B=1-80, A/B=82-433"/>
</dbReference>
<dbReference type="PDB" id="6CTS">
    <property type="method" value="X-ray"/>
    <property type="resolution" value="2.50 A"/>
    <property type="chains" value="A=1-433"/>
</dbReference>
<dbReference type="PDBsum" id="1AL6"/>
<dbReference type="PDBsum" id="1AMZ"/>
<dbReference type="PDBsum" id="1CSC"/>
<dbReference type="PDBsum" id="1CSH"/>
<dbReference type="PDBsum" id="1CSI"/>
<dbReference type="PDBsum" id="1CSR"/>
<dbReference type="PDBsum" id="1CSS"/>
<dbReference type="PDBsum" id="2CSC"/>
<dbReference type="PDBsum" id="3CSC"/>
<dbReference type="PDBsum" id="4CSC"/>
<dbReference type="PDBsum" id="5CSC"/>
<dbReference type="PDBsum" id="5CTS"/>
<dbReference type="PDBsum" id="6CSC"/>
<dbReference type="PDBsum" id="6CTS"/>
<dbReference type="SMR" id="P23007"/>
<dbReference type="FunCoup" id="P23007">
    <property type="interactions" value="2675"/>
</dbReference>
<dbReference type="STRING" id="9031.ENSGALP00000053792"/>
<dbReference type="VEuPathDB" id="HostDB:geneid_100858903"/>
<dbReference type="InParanoid" id="P23007"/>
<dbReference type="OrthoDB" id="8017587at2759"/>
<dbReference type="PhylomeDB" id="P23007"/>
<dbReference type="BRENDA" id="2.3.3.1">
    <property type="organism ID" value="1306"/>
</dbReference>
<dbReference type="Reactome" id="R-GGA-372987">
    <property type="pathway name" value="The tricarboxylic acid cycle"/>
</dbReference>
<dbReference type="SABIO-RK" id="P23007"/>
<dbReference type="UniPathway" id="UPA00223">
    <property type="reaction ID" value="UER00717"/>
</dbReference>
<dbReference type="EvolutionaryTrace" id="P23007"/>
<dbReference type="Proteomes" id="UP000000539">
    <property type="component" value="Unassembled WGS sequence"/>
</dbReference>
<dbReference type="GO" id="GO:0005759">
    <property type="term" value="C:mitochondrial matrix"/>
    <property type="evidence" value="ECO:0000250"/>
    <property type="project" value="UniProtKB"/>
</dbReference>
<dbReference type="GO" id="GO:0005739">
    <property type="term" value="C:mitochondrion"/>
    <property type="evidence" value="ECO:0000250"/>
    <property type="project" value="AgBase"/>
</dbReference>
<dbReference type="GO" id="GO:0004108">
    <property type="term" value="F:citrate (Si)-synthase activity"/>
    <property type="evidence" value="ECO:0000250"/>
    <property type="project" value="UniProtKB"/>
</dbReference>
<dbReference type="GO" id="GO:0036440">
    <property type="term" value="F:citrate synthase activity"/>
    <property type="evidence" value="ECO:0000314"/>
    <property type="project" value="AgBase"/>
</dbReference>
<dbReference type="GO" id="GO:0042802">
    <property type="term" value="F:identical protein binding"/>
    <property type="evidence" value="ECO:0000250"/>
    <property type="project" value="UniProtKB"/>
</dbReference>
<dbReference type="GO" id="GO:0005975">
    <property type="term" value="P:carbohydrate metabolic process"/>
    <property type="evidence" value="ECO:0000250"/>
    <property type="project" value="UniProtKB"/>
</dbReference>
<dbReference type="GO" id="GO:0006101">
    <property type="term" value="P:citrate metabolic process"/>
    <property type="evidence" value="ECO:0007669"/>
    <property type="project" value="InterPro"/>
</dbReference>
<dbReference type="GO" id="GO:0006099">
    <property type="term" value="P:tricarboxylic acid cycle"/>
    <property type="evidence" value="ECO:0000318"/>
    <property type="project" value="GO_Central"/>
</dbReference>
<dbReference type="CDD" id="cd06105">
    <property type="entry name" value="ScCit1-2_like"/>
    <property type="match status" value="1"/>
</dbReference>
<dbReference type="FunFam" id="1.10.230.10:FF:000001">
    <property type="entry name" value="Citrate synthase"/>
    <property type="match status" value="1"/>
</dbReference>
<dbReference type="FunFam" id="1.10.580.10:FF:000001">
    <property type="entry name" value="Citrate synthase"/>
    <property type="match status" value="1"/>
</dbReference>
<dbReference type="Gene3D" id="1.10.580.10">
    <property type="entry name" value="Citrate Synthase, domain 1"/>
    <property type="match status" value="1"/>
</dbReference>
<dbReference type="Gene3D" id="1.10.230.10">
    <property type="entry name" value="Cytochrome P450-Terp, domain 2"/>
    <property type="match status" value="1"/>
</dbReference>
<dbReference type="InterPro" id="IPR016142">
    <property type="entry name" value="Citrate_synth-like_lrg_a-sub"/>
</dbReference>
<dbReference type="InterPro" id="IPR016143">
    <property type="entry name" value="Citrate_synth-like_sm_a-sub"/>
</dbReference>
<dbReference type="InterPro" id="IPR002020">
    <property type="entry name" value="Citrate_synthase"/>
</dbReference>
<dbReference type="InterPro" id="IPR019810">
    <property type="entry name" value="Citrate_synthase_AS"/>
</dbReference>
<dbReference type="InterPro" id="IPR010109">
    <property type="entry name" value="Citrate_synthase_euk"/>
</dbReference>
<dbReference type="InterPro" id="IPR036969">
    <property type="entry name" value="Citrate_synthase_sf"/>
</dbReference>
<dbReference type="NCBIfam" id="TIGR01793">
    <property type="entry name" value="cit_synth_euk"/>
    <property type="match status" value="1"/>
</dbReference>
<dbReference type="NCBIfam" id="NF007128">
    <property type="entry name" value="PRK09569.1"/>
    <property type="match status" value="1"/>
</dbReference>
<dbReference type="PANTHER" id="PTHR11739">
    <property type="entry name" value="CITRATE SYNTHASE"/>
    <property type="match status" value="1"/>
</dbReference>
<dbReference type="PANTHER" id="PTHR11739:SF8">
    <property type="entry name" value="CITRATE SYNTHASE, MITOCHONDRIAL"/>
    <property type="match status" value="1"/>
</dbReference>
<dbReference type="Pfam" id="PF00285">
    <property type="entry name" value="Citrate_synt"/>
    <property type="match status" value="1"/>
</dbReference>
<dbReference type="PRINTS" id="PR00143">
    <property type="entry name" value="CITRTSNTHASE"/>
</dbReference>
<dbReference type="SUPFAM" id="SSF48256">
    <property type="entry name" value="Citrate synthase"/>
    <property type="match status" value="1"/>
</dbReference>
<dbReference type="PROSITE" id="PS00480">
    <property type="entry name" value="CITRATE_SYNTHASE"/>
    <property type="match status" value="1"/>
</dbReference>
<protein>
    <recommendedName>
        <fullName>Citrate synthase, mitochondrial</fullName>
        <ecNumber>2.3.3.1</ecNumber>
    </recommendedName>
    <alternativeName>
        <fullName>Citrate (Si)-synthase</fullName>
    </alternativeName>
</protein>